<proteinExistence type="evidence at protein level"/>
<gene>
    <name type="primary">Foxa1</name>
    <name type="synonym">Hnf3a</name>
    <name type="synonym">Tcf-3a</name>
    <name type="synonym">Tcf3a</name>
</gene>
<feature type="chain" id="PRO_0000091794" description="Hepatocyte nuclear factor 3-alpha">
    <location>
        <begin position="1"/>
        <end position="466"/>
    </location>
</feature>
<feature type="DNA-binding region" description="Fork-head" evidence="3">
    <location>
        <begin position="169"/>
        <end position="260"/>
    </location>
</feature>
<feature type="region of interest" description="Essential for DNA binding">
    <location>
        <begin position="251"/>
        <end position="288"/>
    </location>
</feature>
<feature type="region of interest" description="Disordered" evidence="4">
    <location>
        <begin position="269"/>
        <end position="358"/>
    </location>
</feature>
<feature type="compositionally biased region" description="Gly residues" evidence="4">
    <location>
        <begin position="273"/>
        <end position="284"/>
    </location>
</feature>
<feature type="compositionally biased region" description="Low complexity" evidence="4">
    <location>
        <begin position="318"/>
        <end position="328"/>
    </location>
</feature>
<feature type="compositionally biased region" description="Low complexity" evidence="4">
    <location>
        <begin position="344"/>
        <end position="358"/>
    </location>
</feature>
<feature type="modified residue" description="Phosphoserine" evidence="10">
    <location>
        <position position="303"/>
    </location>
</feature>
<feature type="modified residue" description="Phosphoserine" evidence="2">
    <location>
        <position position="327"/>
    </location>
</feature>
<protein>
    <recommendedName>
        <fullName>Hepatocyte nuclear factor 3-alpha</fullName>
        <shortName>HNF-3-alpha</shortName>
        <shortName>HNF-3A</shortName>
    </recommendedName>
    <alternativeName>
        <fullName>Forkhead box protein A1</fullName>
    </alternativeName>
</protein>
<keyword id="KW-0010">Activator</keyword>
<keyword id="KW-0156">Chromatin regulator</keyword>
<keyword id="KW-0217">Developmental protein</keyword>
<keyword id="KW-0903">Direct protein sequencing</keyword>
<keyword id="KW-0238">DNA-binding</keyword>
<keyword id="KW-0539">Nucleus</keyword>
<keyword id="KW-0597">Phosphoprotein</keyword>
<keyword id="KW-1185">Reference proteome</keyword>
<keyword id="KW-0678">Repressor</keyword>
<keyword id="KW-0804">Transcription</keyword>
<keyword id="KW-0805">Transcription regulation</keyword>
<comment type="function">
    <text evidence="5 6 8 9">Transcription factor that is involved in embryonic development, establishment of tissue-specific gene expression and regulation of gene expression in differentiated tissues. Is thought to act as a 'pioneer' factor opening the compacted chromatin for other proteins through interactions with nucleosomal core histones and thereby replacing linker histones at target enhancer and/or promoter sites. Binds DNA with the consensus sequence 5'-[AC]A[AT]T[AG]TT[GT][AG][CT]T[CT]-3'. Proposed to play a role in translating the epigenetic signatures into cell type-specific enhancer-driven transcriptional programs. Involved in glucose homeostasis; activates the GCG promoter. Involved in the development of multiple endoderm-derived organ systems such as the liver, pancreas, lungs and prostate; FOXA1 and FOXA2 seem to have at least in part redundant roles. Modulates the transcriptional activity of nuclear hormone receptors. Is required for maximal gene activation mediated by AR in the prostate. Negatively regulates AR transactivation via competition with coactivators such as NCOA2. Is involved in ESR1-mediated transcription. Involved in regulation of apoptosis. Involved in cell cycle regulation. Originally described as a transcription activator for a number of liver genes such as AFP, albumin, tyrosine aminotransferase, PEPCK, etc. Interacts with the cis-acting regulatory regions of these genes.</text>
</comment>
<comment type="subunit">
    <text evidence="1 5 6 7 8 9">Binds DNA as a monomer. Interacts with FOXA2. Interacts with NKX2-1. Interacts with HDAC7. Interacts with the histone H3-H4 heterodimer. Associates with nucleosomes containing histone H2A (By similarity). Interacts with AR. Interacts with NR0B2.</text>
</comment>
<comment type="subcellular location">
    <subcellularLocation>
        <location>Nucleus</location>
    </subcellularLocation>
</comment>
<comment type="tissue specificity">
    <text>Liver.</text>
</comment>
<accession>P23512</accession>
<dbReference type="EMBL" id="X55955">
    <property type="protein sequence ID" value="CAA39418.1"/>
    <property type="molecule type" value="mRNA"/>
</dbReference>
<dbReference type="PIR" id="A36674">
    <property type="entry name" value="A36674"/>
</dbReference>
<dbReference type="RefSeq" id="NP_036874.1">
    <property type="nucleotide sequence ID" value="NM_012742.1"/>
</dbReference>
<dbReference type="SMR" id="P23512"/>
<dbReference type="FunCoup" id="P23512">
    <property type="interactions" value="584"/>
</dbReference>
<dbReference type="IntAct" id="P23512">
    <property type="interactions" value="1"/>
</dbReference>
<dbReference type="STRING" id="10116.ENSRNOP00000009940"/>
<dbReference type="iPTMnet" id="P23512"/>
<dbReference type="PhosphoSitePlus" id="P23512"/>
<dbReference type="PaxDb" id="10116-ENSRNOP00000009940"/>
<dbReference type="GeneID" id="25098"/>
<dbReference type="KEGG" id="rno:25098"/>
<dbReference type="UCSC" id="RGD:2807">
    <property type="organism name" value="rat"/>
</dbReference>
<dbReference type="AGR" id="RGD:2807"/>
<dbReference type="CTD" id="3169"/>
<dbReference type="RGD" id="2807">
    <property type="gene designation" value="Foxa1"/>
</dbReference>
<dbReference type="eggNOG" id="KOG3563">
    <property type="taxonomic scope" value="Eukaryota"/>
</dbReference>
<dbReference type="InParanoid" id="P23512"/>
<dbReference type="Reactome" id="R-RNO-9018519">
    <property type="pathway name" value="Estrogen-dependent gene expression"/>
</dbReference>
<dbReference type="PRO" id="PR:P23512"/>
<dbReference type="Proteomes" id="UP000002494">
    <property type="component" value="Unplaced"/>
</dbReference>
<dbReference type="GO" id="GO:0005902">
    <property type="term" value="C:microvillus"/>
    <property type="evidence" value="ECO:0000266"/>
    <property type="project" value="RGD"/>
</dbReference>
<dbReference type="GO" id="GO:0005634">
    <property type="term" value="C:nucleus"/>
    <property type="evidence" value="ECO:0000266"/>
    <property type="project" value="RGD"/>
</dbReference>
<dbReference type="GO" id="GO:0003682">
    <property type="term" value="F:chromatin binding"/>
    <property type="evidence" value="ECO:0000266"/>
    <property type="project" value="RGD"/>
</dbReference>
<dbReference type="GO" id="GO:0003677">
    <property type="term" value="F:DNA binding"/>
    <property type="evidence" value="ECO:0000266"/>
    <property type="project" value="RGD"/>
</dbReference>
<dbReference type="GO" id="GO:0001228">
    <property type="term" value="F:DNA-binding transcription activator activity, RNA polymerase II-specific"/>
    <property type="evidence" value="ECO:0000314"/>
    <property type="project" value="BHF-UCL"/>
</dbReference>
<dbReference type="GO" id="GO:0003700">
    <property type="term" value="F:DNA-binding transcription factor activity"/>
    <property type="evidence" value="ECO:0000314"/>
    <property type="project" value="MGI"/>
</dbReference>
<dbReference type="GO" id="GO:0000981">
    <property type="term" value="F:DNA-binding transcription factor activity, RNA polymerase II-specific"/>
    <property type="evidence" value="ECO:0000318"/>
    <property type="project" value="GO_Central"/>
</dbReference>
<dbReference type="GO" id="GO:0003690">
    <property type="term" value="F:double-stranded DNA binding"/>
    <property type="evidence" value="ECO:0000314"/>
    <property type="project" value="RGD"/>
</dbReference>
<dbReference type="GO" id="GO:0019904">
    <property type="term" value="F:protein domain specific binding"/>
    <property type="evidence" value="ECO:0000314"/>
    <property type="project" value="RGD"/>
</dbReference>
<dbReference type="GO" id="GO:0000978">
    <property type="term" value="F:RNA polymerase II cis-regulatory region sequence-specific DNA binding"/>
    <property type="evidence" value="ECO:0000266"/>
    <property type="project" value="RGD"/>
</dbReference>
<dbReference type="GO" id="GO:0061629">
    <property type="term" value="F:RNA polymerase II-specific DNA-binding transcription factor binding"/>
    <property type="evidence" value="ECO:0000353"/>
    <property type="project" value="ARUK-UCL"/>
</dbReference>
<dbReference type="GO" id="GO:0043565">
    <property type="term" value="F:sequence-specific DNA binding"/>
    <property type="evidence" value="ECO:0000314"/>
    <property type="project" value="RGD"/>
</dbReference>
<dbReference type="GO" id="GO:1990837">
    <property type="term" value="F:sequence-specific double-stranded DNA binding"/>
    <property type="evidence" value="ECO:0000266"/>
    <property type="project" value="RGD"/>
</dbReference>
<dbReference type="GO" id="GO:0000976">
    <property type="term" value="F:transcription cis-regulatory region binding"/>
    <property type="evidence" value="ECO:0000266"/>
    <property type="project" value="RGD"/>
</dbReference>
<dbReference type="GO" id="GO:0061144">
    <property type="term" value="P:alveolar secondary septum development"/>
    <property type="evidence" value="ECO:0000266"/>
    <property type="project" value="RGD"/>
</dbReference>
<dbReference type="GO" id="GO:0048646">
    <property type="term" value="P:anatomical structure formation involved in morphogenesis"/>
    <property type="evidence" value="ECO:0000266"/>
    <property type="project" value="RGD"/>
</dbReference>
<dbReference type="GO" id="GO:0009653">
    <property type="term" value="P:anatomical structure morphogenesis"/>
    <property type="evidence" value="ECO:0000318"/>
    <property type="project" value="GO_Central"/>
</dbReference>
<dbReference type="GO" id="GO:0030154">
    <property type="term" value="P:cell differentiation"/>
    <property type="evidence" value="ECO:0000318"/>
    <property type="project" value="GO_Central"/>
</dbReference>
<dbReference type="GO" id="GO:0006338">
    <property type="term" value="P:chromatin remodeling"/>
    <property type="evidence" value="ECO:0000266"/>
    <property type="project" value="RGD"/>
</dbReference>
<dbReference type="GO" id="GO:0061448">
    <property type="term" value="P:connective tissue development"/>
    <property type="evidence" value="ECO:0000266"/>
    <property type="project" value="RGD"/>
</dbReference>
<dbReference type="GO" id="GO:0071542">
    <property type="term" value="P:dopaminergic neuron differentiation"/>
    <property type="evidence" value="ECO:0000266"/>
    <property type="project" value="RGD"/>
</dbReference>
<dbReference type="GO" id="GO:0021904">
    <property type="term" value="P:dorsal/ventral neural tube patterning"/>
    <property type="evidence" value="ECO:0000266"/>
    <property type="project" value="RGD"/>
</dbReference>
<dbReference type="GO" id="GO:0060743">
    <property type="term" value="P:epithelial cell maturation involved in prostate gland development"/>
    <property type="evidence" value="ECO:0000266"/>
    <property type="project" value="RGD"/>
</dbReference>
<dbReference type="GO" id="GO:0060441">
    <property type="term" value="P:epithelial tube branching involved in lung morphogenesis"/>
    <property type="evidence" value="ECO:0000266"/>
    <property type="project" value="RGD"/>
</dbReference>
<dbReference type="GO" id="GO:0042593">
    <property type="term" value="P:glucose homeostasis"/>
    <property type="evidence" value="ECO:0000266"/>
    <property type="project" value="RGD"/>
</dbReference>
<dbReference type="GO" id="GO:0042445">
    <property type="term" value="P:hormone metabolic process"/>
    <property type="evidence" value="ECO:0000266"/>
    <property type="project" value="RGD"/>
</dbReference>
<dbReference type="GO" id="GO:0030324">
    <property type="term" value="P:lung development"/>
    <property type="evidence" value="ECO:0000266"/>
    <property type="project" value="RGD"/>
</dbReference>
<dbReference type="GO" id="GO:0060487">
    <property type="term" value="P:lung epithelial cell differentiation"/>
    <property type="evidence" value="ECO:0000266"/>
    <property type="project" value="RGD"/>
</dbReference>
<dbReference type="GO" id="GO:0060425">
    <property type="term" value="P:lung morphogenesis"/>
    <property type="evidence" value="ECO:0000266"/>
    <property type="project" value="RGD"/>
</dbReference>
<dbReference type="GO" id="GO:0060739">
    <property type="term" value="P:mesenchymal-epithelial cell signaling involved in prostate gland development"/>
    <property type="evidence" value="ECO:0000266"/>
    <property type="project" value="RGD"/>
</dbReference>
<dbReference type="GO" id="GO:0010719">
    <property type="term" value="P:negative regulation of epithelial to mesenchymal transition"/>
    <property type="evidence" value="ECO:0000266"/>
    <property type="project" value="RGD"/>
</dbReference>
<dbReference type="GO" id="GO:0000122">
    <property type="term" value="P:negative regulation of transcription by RNA polymerase II"/>
    <property type="evidence" value="ECO:0000316"/>
    <property type="project" value="MGI"/>
</dbReference>
<dbReference type="GO" id="GO:0030182">
    <property type="term" value="P:neuron differentiation"/>
    <property type="evidence" value="ECO:0000266"/>
    <property type="project" value="RGD"/>
</dbReference>
<dbReference type="GO" id="GO:0048665">
    <property type="term" value="P:neuron fate specification"/>
    <property type="evidence" value="ECO:0000266"/>
    <property type="project" value="RGD"/>
</dbReference>
<dbReference type="GO" id="GO:0007219">
    <property type="term" value="P:Notch signaling pathway"/>
    <property type="evidence" value="ECO:0000266"/>
    <property type="project" value="RGD"/>
</dbReference>
<dbReference type="GO" id="GO:0043065">
    <property type="term" value="P:positive regulation of apoptotic process"/>
    <property type="evidence" value="ECO:0000266"/>
    <property type="project" value="RGD"/>
</dbReference>
<dbReference type="GO" id="GO:1904340">
    <property type="term" value="P:positive regulation of dopaminergic neuron differentiation"/>
    <property type="evidence" value="ECO:0000266"/>
    <property type="project" value="RGD"/>
</dbReference>
<dbReference type="GO" id="GO:1901300">
    <property type="term" value="P:positive regulation of hydrogen peroxide-mediated programmed cell death"/>
    <property type="evidence" value="ECO:0000315"/>
    <property type="project" value="RGD"/>
</dbReference>
<dbReference type="GO" id="GO:0033148">
    <property type="term" value="P:positive regulation of intracellular estrogen receptor signaling pathway"/>
    <property type="evidence" value="ECO:0000266"/>
    <property type="project" value="RGD"/>
</dbReference>
<dbReference type="GO" id="GO:0045931">
    <property type="term" value="P:positive regulation of mitotic cell cycle"/>
    <property type="evidence" value="ECO:0000266"/>
    <property type="project" value="RGD"/>
</dbReference>
<dbReference type="GO" id="GO:0045880">
    <property type="term" value="P:positive regulation of smoothened signaling pathway"/>
    <property type="evidence" value="ECO:0000266"/>
    <property type="project" value="RGD"/>
</dbReference>
<dbReference type="GO" id="GO:0045944">
    <property type="term" value="P:positive regulation of transcription by RNA polymerase II"/>
    <property type="evidence" value="ECO:0000314"/>
    <property type="project" value="BHF-UCL"/>
</dbReference>
<dbReference type="GO" id="GO:0060740">
    <property type="term" value="P:prostate gland epithelium morphogenesis"/>
    <property type="evidence" value="ECO:0000266"/>
    <property type="project" value="RGD"/>
</dbReference>
<dbReference type="GO" id="GO:0060741">
    <property type="term" value="P:prostate gland stromal morphogenesis"/>
    <property type="evidence" value="ECO:0000266"/>
    <property type="project" value="RGD"/>
</dbReference>
<dbReference type="GO" id="GO:0051726">
    <property type="term" value="P:regulation of cell cycle"/>
    <property type="evidence" value="ECO:0000266"/>
    <property type="project" value="RGD"/>
</dbReference>
<dbReference type="GO" id="GO:0010468">
    <property type="term" value="P:regulation of gene expression"/>
    <property type="evidence" value="ECO:0000266"/>
    <property type="project" value="RGD"/>
</dbReference>
<dbReference type="GO" id="GO:0006357">
    <property type="term" value="P:regulation of transcription by RNA polymerase II"/>
    <property type="evidence" value="ECO:0000266"/>
    <property type="project" value="RGD"/>
</dbReference>
<dbReference type="GO" id="GO:1902691">
    <property type="term" value="P:respiratory basal cell differentiation"/>
    <property type="evidence" value="ECO:0000266"/>
    <property type="project" value="RGD"/>
</dbReference>
<dbReference type="GO" id="GO:0032355">
    <property type="term" value="P:response to estradiol"/>
    <property type="evidence" value="ECO:0000266"/>
    <property type="project" value="RGD"/>
</dbReference>
<dbReference type="GO" id="GO:0060528">
    <property type="term" value="P:secretory columnal luminar epithelial cell differentiation involved in prostate glandular acinus development"/>
    <property type="evidence" value="ECO:0000266"/>
    <property type="project" value="RGD"/>
</dbReference>
<dbReference type="GO" id="GO:0007224">
    <property type="term" value="P:smoothened signaling pathway"/>
    <property type="evidence" value="ECO:0000266"/>
    <property type="project" value="RGD"/>
</dbReference>
<dbReference type="GO" id="GO:0035239">
    <property type="term" value="P:tube morphogenesis"/>
    <property type="evidence" value="ECO:0000266"/>
    <property type="project" value="RGD"/>
</dbReference>
<dbReference type="CDD" id="cd20038">
    <property type="entry name" value="FH_FOXA1"/>
    <property type="match status" value="1"/>
</dbReference>
<dbReference type="FunFam" id="1.10.10.10:FF:000042">
    <property type="entry name" value="hepatocyte nuclear factor 3-beta"/>
    <property type="match status" value="1"/>
</dbReference>
<dbReference type="Gene3D" id="1.10.10.10">
    <property type="entry name" value="Winged helix-like DNA-binding domain superfamily/Winged helix DNA-binding domain"/>
    <property type="match status" value="1"/>
</dbReference>
<dbReference type="InterPro" id="IPR013638">
    <property type="entry name" value="Fork-head_N"/>
</dbReference>
<dbReference type="InterPro" id="IPR001766">
    <property type="entry name" value="Fork_head_dom"/>
</dbReference>
<dbReference type="InterPro" id="IPR018533">
    <property type="entry name" value="Forkhead_box_C"/>
</dbReference>
<dbReference type="InterPro" id="IPR050211">
    <property type="entry name" value="FOX_domain-containing"/>
</dbReference>
<dbReference type="InterPro" id="IPR018122">
    <property type="entry name" value="TF_fork_head_CS_1"/>
</dbReference>
<dbReference type="InterPro" id="IPR030456">
    <property type="entry name" value="TF_fork_head_CS_2"/>
</dbReference>
<dbReference type="InterPro" id="IPR036388">
    <property type="entry name" value="WH-like_DNA-bd_sf"/>
</dbReference>
<dbReference type="InterPro" id="IPR036390">
    <property type="entry name" value="WH_DNA-bd_sf"/>
</dbReference>
<dbReference type="PANTHER" id="PTHR11829">
    <property type="entry name" value="FORKHEAD BOX PROTEIN"/>
    <property type="match status" value="1"/>
</dbReference>
<dbReference type="PANTHER" id="PTHR11829:SF195">
    <property type="entry name" value="HEPATOCYTE NUCLEAR FACTOR 3-ALPHA"/>
    <property type="match status" value="1"/>
</dbReference>
<dbReference type="Pfam" id="PF00250">
    <property type="entry name" value="Forkhead"/>
    <property type="match status" value="1"/>
</dbReference>
<dbReference type="Pfam" id="PF08430">
    <property type="entry name" value="Forkhead_N"/>
    <property type="match status" value="1"/>
</dbReference>
<dbReference type="Pfam" id="PF09354">
    <property type="entry name" value="HNF_C"/>
    <property type="match status" value="1"/>
</dbReference>
<dbReference type="PRINTS" id="PR00053">
    <property type="entry name" value="FORKHEAD"/>
</dbReference>
<dbReference type="SMART" id="SM00339">
    <property type="entry name" value="FH"/>
    <property type="match status" value="1"/>
</dbReference>
<dbReference type="SUPFAM" id="SSF46785">
    <property type="entry name" value="Winged helix' DNA-binding domain"/>
    <property type="match status" value="1"/>
</dbReference>
<dbReference type="PROSITE" id="PS00657">
    <property type="entry name" value="FORK_HEAD_1"/>
    <property type="match status" value="1"/>
</dbReference>
<dbReference type="PROSITE" id="PS00658">
    <property type="entry name" value="FORK_HEAD_2"/>
    <property type="match status" value="1"/>
</dbReference>
<dbReference type="PROSITE" id="PS50039">
    <property type="entry name" value="FORK_HEAD_3"/>
    <property type="match status" value="1"/>
</dbReference>
<sequence length="466" mass="48775">MLGTVKMEGHESNDWNSYYADTQEAYSSVPVSNMNSGLGSMNSMNTYMTMNTMTTSGNMTPASFNMSYANPGLGAGLSPGAVAGMPGGSAGAMNSMTAAGVTAMGAALSPGGMGSMGAQPAASMNGLGPYAAAMNPCMSPMAYAPSNLGRSRAGGGGDAKTFKRSYPHAKPPYSYISLITMAIQQAPSKMLTLSEIYQWIMDLFPYYRQNQQRWQNSIRHSLSFNACFVKVARSPDKPGKGSYWTLHPDSGNMFENGCYLRRQKRFKCEKQPGAGGGSGGGGSKGVPENRKDPSGPVNPSAESPIHRGVHGKASQLEGAPAPGPAASPQTLDHSGATATGGGSELKSPASSSAPPISSGPGGWICTPLSPTWLAPHESQLHLKGAPHYSFNHPFSINNLMSSSEQQHKLDFKAYEQALQYSPYGATLPASLPLGGASVATRSPIEPSALEPAYYQGVYSRPVLNTS</sequence>
<organism>
    <name type="scientific">Rattus norvegicus</name>
    <name type="common">Rat</name>
    <dbReference type="NCBI Taxonomy" id="10116"/>
    <lineage>
        <taxon>Eukaryota</taxon>
        <taxon>Metazoa</taxon>
        <taxon>Chordata</taxon>
        <taxon>Craniata</taxon>
        <taxon>Vertebrata</taxon>
        <taxon>Euteleostomi</taxon>
        <taxon>Mammalia</taxon>
        <taxon>Eutheria</taxon>
        <taxon>Euarchontoglires</taxon>
        <taxon>Glires</taxon>
        <taxon>Rodentia</taxon>
        <taxon>Myomorpha</taxon>
        <taxon>Muroidea</taxon>
        <taxon>Muridae</taxon>
        <taxon>Murinae</taxon>
        <taxon>Rattus</taxon>
    </lineage>
</organism>
<name>FOXA1_RAT</name>
<reference key="1">
    <citation type="journal article" date="1990" name="Genes Dev.">
        <title>HNF-3A, a hepatocyte-enriched transcription factor of novel structure is regulated transcriptionally.</title>
        <authorList>
            <person name="Lai E."/>
            <person name="Prezioso V.R."/>
            <person name="Smith E."/>
            <person name="Litvin O."/>
            <person name="Costa R.H."/>
            <person name="Darnell J.E. Jr."/>
        </authorList>
    </citation>
    <scope>NUCLEOTIDE SEQUENCE [MRNA]</scope>
    <scope>PROTEIN SEQUENCE OF 313-337 AND 413-434</scope>
    <source>
        <tissue>Liver</tissue>
    </source>
</reference>
<reference key="2">
    <citation type="journal article" date="2003" name="Mol. Endocrinol.">
        <title>The role of hepatocyte nuclear factor-3 alpha (Forkhead Box A1) and androgen receptor in transcriptional regulation of prostatic genes.</title>
        <authorList>
            <person name="Gao N."/>
            <person name="Zhang J."/>
            <person name="Rao M.A."/>
            <person name="Case T.C."/>
            <person name="Mirosevich J."/>
            <person name="Wang Y."/>
            <person name="Jin R."/>
            <person name="Gupta A."/>
            <person name="Rennie P.S."/>
            <person name="Matusik R.J."/>
        </authorList>
    </citation>
    <scope>FUNCTION IN PROSTATE AR ACTIVATION</scope>
    <scope>INTERACTION WITH AR</scope>
</reference>
<reference key="3">
    <citation type="journal article" date="2004" name="Mol. Endocrinol.">
        <title>Orphan nuclear receptor small heterodimer partner represses hepatocyte nuclear factor 3/Foxa transactivation via inhibition of its DNA binding.</title>
        <authorList>
            <person name="Kim J.Y."/>
            <person name="Kim H.J."/>
            <person name="Kim K.T."/>
            <person name="Park Y.Y."/>
            <person name="Seong H.A."/>
            <person name="Park K.C."/>
            <person name="Lee I.K."/>
            <person name="Ha H."/>
            <person name="Shong M."/>
            <person name="Park S.C."/>
            <person name="Choi H.S."/>
        </authorList>
    </citation>
    <scope>FUNCTION</scope>
    <scope>INTERACTION WITH NR0B2</scope>
</reference>
<reference key="4">
    <citation type="journal article" date="2007" name="J. Mol. Biol.">
        <title>Specific interactions of the wing domains of FOXA1 transcription factor with DNA.</title>
        <authorList>
            <person name="Cirillo L.A."/>
            <person name="Zaret K.S."/>
        </authorList>
    </citation>
    <scope>DNA-BINDING</scope>
    <scope>SUBUNIT</scope>
</reference>
<reference key="5">
    <citation type="journal article" date="2007" name="Mol. Cell. Biol.">
        <title>Physical and functional interactions between homeodomain NKX2.1 and winged helix/forkhead FOXA1 in lung epithelial cells.</title>
        <authorList>
            <person name="Minoo P."/>
            <person name="Hu L."/>
            <person name="Xing Y."/>
            <person name="Zhu N.L."/>
            <person name="Chen H."/>
            <person name="Li M."/>
            <person name="Borok Z."/>
            <person name="Li C."/>
        </authorList>
    </citation>
    <scope>FUNCTION</scope>
    <scope>INTERACTION WITH NKX2-1</scope>
</reference>
<reference key="6">
    <citation type="journal article" date="2008" name="Biochem. Biophys. Res. Commun.">
        <title>Hepatocyte nuclear factor-3 alpha (HNF-3alpha) negatively regulates androgen receptor transactivation in prostate cancer cells.</title>
        <authorList>
            <person name="Lee H.J."/>
            <person name="Hwang M."/>
            <person name="Chattopadhyay S."/>
            <person name="Choi H.S."/>
            <person name="Lee K."/>
        </authorList>
    </citation>
    <scope>FUNCTION IN PROSTATE AR ACTIVATION</scope>
    <scope>INTERACTION WITH AR</scope>
</reference>
<reference key="7">
    <citation type="journal article" date="2012" name="Nat. Commun.">
        <title>Quantitative maps of protein phosphorylation sites across 14 different rat organs and tissues.</title>
        <authorList>
            <person name="Lundby A."/>
            <person name="Secher A."/>
            <person name="Lage K."/>
            <person name="Nordsborg N.B."/>
            <person name="Dmytriyev A."/>
            <person name="Lundby C."/>
            <person name="Olsen J.V."/>
        </authorList>
    </citation>
    <scope>PHOSPHORYLATION [LARGE SCALE ANALYSIS] AT SER-303</scope>
    <scope>IDENTIFICATION BY MASS SPECTROMETRY [LARGE SCALE ANALYSIS]</scope>
</reference>
<evidence type="ECO:0000250" key="1"/>
<evidence type="ECO:0000250" key="2">
    <source>
        <dbReference type="UniProtKB" id="P55317"/>
    </source>
</evidence>
<evidence type="ECO:0000255" key="3">
    <source>
        <dbReference type="PROSITE-ProRule" id="PRU00089"/>
    </source>
</evidence>
<evidence type="ECO:0000256" key="4">
    <source>
        <dbReference type="SAM" id="MobiDB-lite"/>
    </source>
</evidence>
<evidence type="ECO:0000269" key="5">
    <source>
    </source>
</evidence>
<evidence type="ECO:0000269" key="6">
    <source>
    </source>
</evidence>
<evidence type="ECO:0000269" key="7">
    <source>
    </source>
</evidence>
<evidence type="ECO:0000269" key="8">
    <source>
    </source>
</evidence>
<evidence type="ECO:0000269" key="9">
    <source>
    </source>
</evidence>
<evidence type="ECO:0007744" key="10">
    <source>
    </source>
</evidence>